<proteinExistence type="inferred from homology"/>
<dbReference type="EMBL" id="CP000381">
    <property type="protein sequence ID" value="ABX72489.1"/>
    <property type="molecule type" value="Genomic_DNA"/>
</dbReference>
<dbReference type="RefSeq" id="WP_012221228.1">
    <property type="nucleotide sequence ID" value="NC_010120.1"/>
</dbReference>
<dbReference type="SMR" id="A9M120"/>
<dbReference type="KEGG" id="nmn:NMCC_0281"/>
<dbReference type="HOGENOM" id="CLU_085114_3_0_4"/>
<dbReference type="Proteomes" id="UP000001177">
    <property type="component" value="Chromosome"/>
</dbReference>
<dbReference type="GO" id="GO:0005886">
    <property type="term" value="C:plasma membrane"/>
    <property type="evidence" value="ECO:0007669"/>
    <property type="project" value="UniProtKB-SubCell"/>
</dbReference>
<dbReference type="GO" id="GO:0045259">
    <property type="term" value="C:proton-transporting ATP synthase complex"/>
    <property type="evidence" value="ECO:0007669"/>
    <property type="project" value="UniProtKB-KW"/>
</dbReference>
<dbReference type="GO" id="GO:0046933">
    <property type="term" value="F:proton-transporting ATP synthase activity, rotational mechanism"/>
    <property type="evidence" value="ECO:0007669"/>
    <property type="project" value="UniProtKB-UniRule"/>
</dbReference>
<dbReference type="Gene3D" id="1.10.520.20">
    <property type="entry name" value="N-terminal domain of the delta subunit of the F1F0-ATP synthase"/>
    <property type="match status" value="1"/>
</dbReference>
<dbReference type="HAMAP" id="MF_01416">
    <property type="entry name" value="ATP_synth_delta_bact"/>
    <property type="match status" value="1"/>
</dbReference>
<dbReference type="InterPro" id="IPR026015">
    <property type="entry name" value="ATP_synth_OSCP/delta_N_sf"/>
</dbReference>
<dbReference type="InterPro" id="IPR020781">
    <property type="entry name" value="ATPase_OSCP/d_CS"/>
</dbReference>
<dbReference type="InterPro" id="IPR000711">
    <property type="entry name" value="ATPase_OSCP/dsu"/>
</dbReference>
<dbReference type="NCBIfam" id="TIGR01145">
    <property type="entry name" value="ATP_synt_delta"/>
    <property type="match status" value="1"/>
</dbReference>
<dbReference type="NCBIfam" id="NF004402">
    <property type="entry name" value="PRK05758.2-2"/>
    <property type="match status" value="1"/>
</dbReference>
<dbReference type="PANTHER" id="PTHR11910">
    <property type="entry name" value="ATP SYNTHASE DELTA CHAIN"/>
    <property type="match status" value="1"/>
</dbReference>
<dbReference type="Pfam" id="PF00213">
    <property type="entry name" value="OSCP"/>
    <property type="match status" value="1"/>
</dbReference>
<dbReference type="PRINTS" id="PR00125">
    <property type="entry name" value="ATPASEDELTA"/>
</dbReference>
<dbReference type="SUPFAM" id="SSF47928">
    <property type="entry name" value="N-terminal domain of the delta subunit of the F1F0-ATP synthase"/>
    <property type="match status" value="1"/>
</dbReference>
<dbReference type="PROSITE" id="PS00389">
    <property type="entry name" value="ATPASE_DELTA"/>
    <property type="match status" value="1"/>
</dbReference>
<sequence>MAEFATIARPYAKALFGLAQEKSQIESWLGGLEKLAAVVQEGKVASLIDRPETNASEKADILIDLVGLKDKELKNFVIVLAGQKRLSILPEVYAQYQDLTLSFNHIKSAVIYSAYPLTDKQVGELAQMLNKRFDSELKISVEIEPELIGGIKVEVGDQVLDLSVRGKLSALYTTMTN</sequence>
<reference key="1">
    <citation type="journal article" date="2008" name="Genomics">
        <title>Characterization of ST-4821 complex, a unique Neisseria meningitidis clone.</title>
        <authorList>
            <person name="Peng J."/>
            <person name="Yang L."/>
            <person name="Yang F."/>
            <person name="Yang J."/>
            <person name="Yan Y."/>
            <person name="Nie H."/>
            <person name="Zhang X."/>
            <person name="Xiong Z."/>
            <person name="Jiang Y."/>
            <person name="Cheng F."/>
            <person name="Xu X."/>
            <person name="Chen S."/>
            <person name="Sun L."/>
            <person name="Li W."/>
            <person name="Shen Y."/>
            <person name="Shao Z."/>
            <person name="Liang X."/>
            <person name="Xu J."/>
            <person name="Jin Q."/>
        </authorList>
    </citation>
    <scope>NUCLEOTIDE SEQUENCE [LARGE SCALE GENOMIC DNA]</scope>
    <source>
        <strain>053442</strain>
    </source>
</reference>
<accession>A9M120</accession>
<evidence type="ECO:0000255" key="1">
    <source>
        <dbReference type="HAMAP-Rule" id="MF_01416"/>
    </source>
</evidence>
<protein>
    <recommendedName>
        <fullName evidence="1">ATP synthase subunit delta</fullName>
    </recommendedName>
    <alternativeName>
        <fullName evidence="1">ATP synthase F(1) sector subunit delta</fullName>
    </alternativeName>
    <alternativeName>
        <fullName evidence="1">F-type ATPase subunit delta</fullName>
        <shortName evidence="1">F-ATPase subunit delta</shortName>
    </alternativeName>
</protein>
<feature type="chain" id="PRO_1000184759" description="ATP synthase subunit delta">
    <location>
        <begin position="1"/>
        <end position="177"/>
    </location>
</feature>
<keyword id="KW-0066">ATP synthesis</keyword>
<keyword id="KW-0997">Cell inner membrane</keyword>
<keyword id="KW-1003">Cell membrane</keyword>
<keyword id="KW-0139">CF(1)</keyword>
<keyword id="KW-0375">Hydrogen ion transport</keyword>
<keyword id="KW-0406">Ion transport</keyword>
<keyword id="KW-0472">Membrane</keyword>
<keyword id="KW-0813">Transport</keyword>
<organism>
    <name type="scientific">Neisseria meningitidis serogroup C (strain 053442)</name>
    <dbReference type="NCBI Taxonomy" id="374833"/>
    <lineage>
        <taxon>Bacteria</taxon>
        <taxon>Pseudomonadati</taxon>
        <taxon>Pseudomonadota</taxon>
        <taxon>Betaproteobacteria</taxon>
        <taxon>Neisseriales</taxon>
        <taxon>Neisseriaceae</taxon>
        <taxon>Neisseria</taxon>
    </lineage>
</organism>
<comment type="function">
    <text evidence="1">F(1)F(0) ATP synthase produces ATP from ADP in the presence of a proton or sodium gradient. F-type ATPases consist of two structural domains, F(1) containing the extramembraneous catalytic core and F(0) containing the membrane proton channel, linked together by a central stalk and a peripheral stalk. During catalysis, ATP synthesis in the catalytic domain of F(1) is coupled via a rotary mechanism of the central stalk subunits to proton translocation.</text>
</comment>
<comment type="function">
    <text evidence="1">This protein is part of the stalk that links CF(0) to CF(1). It either transmits conformational changes from CF(0) to CF(1) or is implicated in proton conduction.</text>
</comment>
<comment type="subunit">
    <text evidence="1">F-type ATPases have 2 components, F(1) - the catalytic core - and F(0) - the membrane proton channel. F(1) has five subunits: alpha(3), beta(3), gamma(1), delta(1), epsilon(1). F(0) has three main subunits: a(1), b(2) and c(10-14). The alpha and beta chains form an alternating ring which encloses part of the gamma chain. F(1) is attached to F(0) by a central stalk formed by the gamma and epsilon chains, while a peripheral stalk is formed by the delta and b chains.</text>
</comment>
<comment type="subcellular location">
    <subcellularLocation>
        <location evidence="1">Cell inner membrane</location>
        <topology evidence="1">Peripheral membrane protein</topology>
    </subcellularLocation>
</comment>
<comment type="similarity">
    <text evidence="1">Belongs to the ATPase delta chain family.</text>
</comment>
<name>ATPD_NEIM0</name>
<gene>
    <name evidence="1" type="primary">atpH</name>
    <name type="ordered locus">NMCC_0281</name>
</gene>